<proteinExistence type="evidence at protein level"/>
<comment type="function">
    <text evidence="1 2">Plays an essential role in transcription initiation and cap-stealing mechanism, in which cellular capped pre-mRNAs are used to generate primers for viral transcription. Recognizes and binds a wide range of cap structures of target pre-RNAs which are subsequently cleaved after 10-13 nucleotides by the viral protein PA. Plays a role in the initiation of the viral genome replication and modulates the activity of the ribonucleoprotein (RNP) complex.</text>
</comment>
<comment type="subunit">
    <text evidence="1 2">Influenza RNA polymerase is composed of three subunits: PB1, PB2 and PA. Interacts (via N-terminus) with PB1 (via C-terminus). Interacts with nucleoprotein NP (via N-terminus). Interacts with host ANP32A (via C-terminus) and ANP32B; these interactions promote viral RNA synthesis (PubMed:33045004).</text>
</comment>
<comment type="subcellular location">
    <subcellularLocation>
        <location evidence="1">Virion</location>
    </subcellularLocation>
    <subcellularLocation>
        <location evidence="1">Host nucleus</location>
    </subcellularLocation>
</comment>
<comment type="similarity">
    <text evidence="1">Belongs to the influenza viruses PB2 family.</text>
</comment>
<name>PB2_INBLE</name>
<sequence>MTLAKIELLKQLLRDNEAKTVLRQTTVDQYNIIRKFNTSRIEKNPSLRMKWAMCSNFPLALTKGDMANRIPLEYKGIQLKTNAEDIGTKGQMCSIAAVTWWNTYGPIGDTEGFEKVYESFFLRKMRLDNATWGRITFGPVERVRKRVLLNPLTKEMPPDEASNVIMEILFPKEAGIPRESTWIHRELIKEKREKLKGTMITPIVLAYMLERELVARRRFLPVAGATSAEFIEMLHCLQGENWRQIYHPGGNKLTESRSQSMIVACRKIIRRSIVASNPLELAVEIANKTVIDTEPLKSCLAALDGGDVACDIIRAALGLKIRQRQRFGRLELKRISGRGFKNDEEILIGNGTIQKIGIWDGEEEFHVRCGECRGILKKSQMRMEKLLINSAKKEDMKDLIILCMVFSQDTRMFQGVRGEINFLNRAGQLLSPMYQLQRYFLNRSNDLFDQWGYEESPKASELHGINELMNASDYTLKGVVVTKNVIDDFSSTETEKVSITKNLSLIKRTGEVIMGANDVSELESQAQLMITYDTPKMWEMGTTKELVQNTYQWVLKNLVTLKAQFLLGKEDMFQWDAFEAFESIIPQKMAGQYSGFARAVLKQMRDQEVMKTDQFIKLLPFCFSPPKLRSNGEPYQFLRLMLKGGGENFIEVRKGSPLFSYNPQTEILTICGRMMSLKGKIEDEERNRSMGNAVLAGFLVSGKYDPDLGDFKTIEELERLKPGEKANILLYQGKPVKVVKRKRYSALSNDISQGIKRQRMTVESMGWALS</sequence>
<accession>Q9QLL6</accession>
<protein>
    <recommendedName>
        <fullName evidence="1">Polymerase basic protein 2</fullName>
    </recommendedName>
    <alternativeName>
        <fullName evidence="1">RNA-directed RNA polymerase subunit P3</fullName>
    </alternativeName>
</protein>
<dbReference type="EMBL" id="AF101982">
    <property type="protein sequence ID" value="AAF06851.1"/>
    <property type="molecule type" value="Genomic_RNA"/>
</dbReference>
<dbReference type="RefSeq" id="NP_056658.1">
    <property type="nucleotide sequence ID" value="NC_002205.1"/>
</dbReference>
<dbReference type="PDB" id="5EF9">
    <property type="method" value="X-ray"/>
    <property type="resolution" value="1.70 A"/>
    <property type="chains" value="A=320-485"/>
</dbReference>
<dbReference type="PDB" id="5EFA">
    <property type="method" value="X-ray"/>
    <property type="resolution" value="1.90 A"/>
    <property type="chains" value="A=320-485"/>
</dbReference>
<dbReference type="PDB" id="5EFC">
    <property type="method" value="X-ray"/>
    <property type="resolution" value="1.90 A"/>
    <property type="chains" value="A=320-485"/>
</dbReference>
<dbReference type="PDB" id="6XQA">
    <property type="method" value="X-ray"/>
    <property type="resolution" value="2.16 A"/>
    <property type="chains" value="C/F=550-558"/>
</dbReference>
<dbReference type="PDBsum" id="5EF9"/>
<dbReference type="PDBsum" id="5EFA"/>
<dbReference type="PDBsum" id="5EFC"/>
<dbReference type="PDBsum" id="6XQA"/>
<dbReference type="SMR" id="Q9QLL6"/>
<dbReference type="GeneID" id="956546"/>
<dbReference type="KEGG" id="vg:956546"/>
<dbReference type="OrthoDB" id="431at10239"/>
<dbReference type="EvolutionaryTrace" id="Q9QLL6"/>
<dbReference type="Proteomes" id="UP000008158">
    <property type="component" value="Genome"/>
</dbReference>
<dbReference type="GO" id="GO:0042025">
    <property type="term" value="C:host cell nucleus"/>
    <property type="evidence" value="ECO:0007669"/>
    <property type="project" value="UniProtKB-SubCell"/>
</dbReference>
<dbReference type="GO" id="GO:0044423">
    <property type="term" value="C:virion component"/>
    <property type="evidence" value="ECO:0007669"/>
    <property type="project" value="UniProtKB-UniRule"/>
</dbReference>
<dbReference type="GO" id="GO:0003723">
    <property type="term" value="F:RNA binding"/>
    <property type="evidence" value="ECO:0007669"/>
    <property type="project" value="UniProtKB-UniRule"/>
</dbReference>
<dbReference type="GO" id="GO:0003968">
    <property type="term" value="F:RNA-directed RNA polymerase activity"/>
    <property type="evidence" value="ECO:0007669"/>
    <property type="project" value="UniProtKB-UniRule"/>
</dbReference>
<dbReference type="GO" id="GO:0006370">
    <property type="term" value="P:7-methylguanosine mRNA capping"/>
    <property type="evidence" value="ECO:0007669"/>
    <property type="project" value="UniProtKB-UniRule"/>
</dbReference>
<dbReference type="GO" id="GO:0075526">
    <property type="term" value="P:cap snatching"/>
    <property type="evidence" value="ECO:0007669"/>
    <property type="project" value="UniProtKB-UniRule"/>
</dbReference>
<dbReference type="GO" id="GO:0006351">
    <property type="term" value="P:DNA-templated transcription"/>
    <property type="evidence" value="ECO:0007669"/>
    <property type="project" value="UniProtKB-UniRule"/>
</dbReference>
<dbReference type="GO" id="GO:0039657">
    <property type="term" value="P:symbiont-mediated suppression of host gene expression"/>
    <property type="evidence" value="ECO:0007669"/>
    <property type="project" value="UniProtKB-KW"/>
</dbReference>
<dbReference type="GO" id="GO:0039523">
    <property type="term" value="P:symbiont-mediated suppression of host mRNA transcription via inhibition of RNA polymerase II activity"/>
    <property type="evidence" value="ECO:0007669"/>
    <property type="project" value="UniProtKB-UniRule"/>
</dbReference>
<dbReference type="GO" id="GO:0039694">
    <property type="term" value="P:viral RNA genome replication"/>
    <property type="evidence" value="ECO:0007669"/>
    <property type="project" value="InterPro"/>
</dbReference>
<dbReference type="Gene3D" id="3.30.30.90">
    <property type="entry name" value="Polymerase Basic Protein 2, C-terminal domain"/>
    <property type="match status" value="1"/>
</dbReference>
<dbReference type="HAMAP" id="MF_04062">
    <property type="entry name" value="INV_PB2"/>
    <property type="match status" value="1"/>
</dbReference>
<dbReference type="InterPro" id="IPR049110">
    <property type="entry name" value="Flu_PB2_2nd"/>
</dbReference>
<dbReference type="InterPro" id="IPR049114">
    <property type="entry name" value="Flu_PB2_6th"/>
</dbReference>
<dbReference type="InterPro" id="IPR049115">
    <property type="entry name" value="Flu_PB2_C"/>
</dbReference>
<dbReference type="InterPro" id="IPR048298">
    <property type="entry name" value="Flu_PB2_CAP-bd"/>
</dbReference>
<dbReference type="InterPro" id="IPR049111">
    <property type="entry name" value="Flu_PB2_middle"/>
</dbReference>
<dbReference type="InterPro" id="IPR049106">
    <property type="entry name" value="Flu_PB2_N"/>
</dbReference>
<dbReference type="InterPro" id="IPR001591">
    <property type="entry name" value="INV_PB2"/>
</dbReference>
<dbReference type="InterPro" id="IPR049113">
    <property type="entry name" value="PB2_helical"/>
</dbReference>
<dbReference type="InterPro" id="IPR037258">
    <property type="entry name" value="PDB2_C"/>
</dbReference>
<dbReference type="Pfam" id="PF20947">
    <property type="entry name" value="Flu_PB2_1st"/>
    <property type="match status" value="1"/>
</dbReference>
<dbReference type="Pfam" id="PF20948">
    <property type="entry name" value="Flu_PB2_2nd"/>
    <property type="match status" value="1"/>
</dbReference>
<dbReference type="Pfam" id="PF20949">
    <property type="entry name" value="Flu_PB2_3rd"/>
    <property type="match status" value="1"/>
</dbReference>
<dbReference type="Pfam" id="PF20950">
    <property type="entry name" value="Flu_PB2_4th"/>
    <property type="match status" value="1"/>
</dbReference>
<dbReference type="Pfam" id="PF00604">
    <property type="entry name" value="Flu_PB2_5th"/>
    <property type="match status" value="1"/>
</dbReference>
<dbReference type="Pfam" id="PF20951">
    <property type="entry name" value="Flu_PB2_6th"/>
    <property type="match status" value="1"/>
</dbReference>
<dbReference type="Pfam" id="PF20952">
    <property type="entry name" value="Flu_PB2_7th"/>
    <property type="match status" value="1"/>
</dbReference>
<dbReference type="SUPFAM" id="SSF160453">
    <property type="entry name" value="PB2 C-terminal domain-like"/>
    <property type="match status" value="1"/>
</dbReference>
<organism>
    <name type="scientific">Influenza B virus (strain B/Lee/1940)</name>
    <dbReference type="NCBI Taxonomy" id="518987"/>
    <lineage>
        <taxon>Viruses</taxon>
        <taxon>Riboviria</taxon>
        <taxon>Orthornavirae</taxon>
        <taxon>Negarnaviricota</taxon>
        <taxon>Polyploviricotina</taxon>
        <taxon>Insthoviricetes</taxon>
        <taxon>Articulavirales</taxon>
        <taxon>Orthomyxoviridae</taxon>
        <taxon>Betainfluenzavirus</taxon>
        <taxon>Betainfluenzavirus influenzae</taxon>
        <taxon>Influenza B virus</taxon>
    </lineage>
</organism>
<keyword id="KW-0002">3D-structure</keyword>
<keyword id="KW-1157">Cap snatching</keyword>
<keyword id="KW-1262">Eukaryotic host gene expression shutoff by virus</keyword>
<keyword id="KW-1191">Eukaryotic host transcription shutoff by virus</keyword>
<keyword id="KW-1190">Host gene expression shutoff by virus</keyword>
<keyword id="KW-1048">Host nucleus</keyword>
<keyword id="KW-0945">Host-virus interaction</keyword>
<keyword id="KW-1104">Inhibition of host RNA polymerase II by virus</keyword>
<keyword id="KW-0506">mRNA capping</keyword>
<keyword id="KW-0507">mRNA processing</keyword>
<keyword id="KW-1185">Reference proteome</keyword>
<keyword id="KW-1195">Viral transcription</keyword>
<keyword id="KW-0946">Virion</keyword>
<evidence type="ECO:0000255" key="1">
    <source>
        <dbReference type="HAMAP-Rule" id="MF_04062"/>
    </source>
</evidence>
<evidence type="ECO:0000269" key="2">
    <source>
    </source>
</evidence>
<evidence type="ECO:0007829" key="3">
    <source>
        <dbReference type="PDB" id="5EF9"/>
    </source>
</evidence>
<evidence type="ECO:0007829" key="4">
    <source>
        <dbReference type="PDB" id="5EFC"/>
    </source>
</evidence>
<reference key="1">
    <citation type="journal article" date="2000" name="J. Gen. Virol.">
        <title>Phylogenetic analysis of the three polymerase genes (PB1, PB2 and PA) of influenza B virus.</title>
        <authorList>
            <person name="Hiromoto Y."/>
            <person name="Saito T."/>
            <person name="Lindstrom S.E."/>
            <person name="Li Y."/>
            <person name="Nerome R."/>
            <person name="Sugita S."/>
            <person name="Shinjoh M."/>
            <person name="Nerome K."/>
        </authorList>
    </citation>
    <scope>NUCLEOTIDE SEQUENCE [GENOMIC RNA]</scope>
</reference>
<reference key="2">
    <citation type="journal article" date="2020" name="PLoS Pathog.">
        <title>Selective usage of ANP32 proteins by influenza B virus polymerase: Implications in determination of host range.</title>
        <authorList>
            <person name="Zhang Z."/>
            <person name="Zhang H."/>
            <person name="Xu L."/>
            <person name="Guo X."/>
            <person name="Wang W."/>
            <person name="Ji Y."/>
            <person name="Lin C."/>
            <person name="Wang Y."/>
            <person name="Wang X."/>
        </authorList>
    </citation>
    <scope>FUNCTION</scope>
    <scope>INTERACTION WITH HOST ANP32A AND ANP32B</scope>
    <source>
        <strain>B/Yamagata/PJ/2018</strain>
    </source>
</reference>
<gene>
    <name evidence="1" type="primary">PB2</name>
</gene>
<feature type="chain" id="PRO_0000391500" description="Polymerase basic protein 2">
    <location>
        <begin position="1"/>
        <end position="770"/>
    </location>
</feature>
<feature type="short sequence motif" description="Nuclear localization signal" evidence="1">
    <location>
        <begin position="740"/>
        <end position="743"/>
    </location>
</feature>
<feature type="strand" evidence="3">
    <location>
        <begin position="325"/>
        <end position="327"/>
    </location>
</feature>
<feature type="strand" evidence="3">
    <location>
        <begin position="330"/>
        <end position="337"/>
    </location>
</feature>
<feature type="strand" evidence="3">
    <location>
        <begin position="340"/>
        <end position="347"/>
    </location>
</feature>
<feature type="strand" evidence="3">
    <location>
        <begin position="353"/>
        <end position="361"/>
    </location>
</feature>
<feature type="strand" evidence="3">
    <location>
        <begin position="363"/>
        <end position="369"/>
    </location>
</feature>
<feature type="strand" evidence="3">
    <location>
        <begin position="372"/>
        <end position="379"/>
    </location>
</feature>
<feature type="strand" evidence="3">
    <location>
        <begin position="382"/>
        <end position="389"/>
    </location>
</feature>
<feature type="helix" evidence="3">
    <location>
        <begin position="393"/>
        <end position="406"/>
    </location>
</feature>
<feature type="helix" evidence="3">
    <location>
        <begin position="410"/>
        <end position="414"/>
    </location>
</feature>
<feature type="strand" evidence="4">
    <location>
        <begin position="427"/>
        <end position="429"/>
    </location>
</feature>
<feature type="helix" evidence="3">
    <location>
        <begin position="432"/>
        <end position="441"/>
    </location>
</feature>
<feature type="helix" evidence="3">
    <location>
        <begin position="444"/>
        <end position="451"/>
    </location>
</feature>
<feature type="strand" evidence="3">
    <location>
        <begin position="453"/>
        <end position="455"/>
    </location>
</feature>
<feature type="strand" evidence="3">
    <location>
        <begin position="462"/>
        <end position="465"/>
    </location>
</feature>
<feature type="strand" evidence="3">
    <location>
        <begin position="471"/>
        <end position="476"/>
    </location>
</feature>
<feature type="strand" evidence="3">
    <location>
        <begin position="479"/>
        <end position="482"/>
    </location>
</feature>
<organismHost>
    <name type="scientific">Homo sapiens</name>
    <name type="common">Human</name>
    <dbReference type="NCBI Taxonomy" id="9606"/>
</organismHost>